<keyword id="KW-1185">Reference proteome</keyword>
<keyword id="KW-0687">Ribonucleoprotein</keyword>
<keyword id="KW-0689">Ribosomal protein</keyword>
<dbReference type="EMBL" id="AE007869">
    <property type="protein sequence ID" value="AAK87683.1"/>
    <property type="molecule type" value="Genomic_DNA"/>
</dbReference>
<dbReference type="PIR" id="AH2812">
    <property type="entry name" value="AH2812"/>
</dbReference>
<dbReference type="PIR" id="B97591">
    <property type="entry name" value="B97591"/>
</dbReference>
<dbReference type="RefSeq" id="NP_354898.1">
    <property type="nucleotide sequence ID" value="NC_003062.2"/>
</dbReference>
<dbReference type="RefSeq" id="WP_006313985.1">
    <property type="nucleotide sequence ID" value="NC_003062.2"/>
</dbReference>
<dbReference type="SMR" id="Q8UE41"/>
<dbReference type="STRING" id="176299.Atu1922"/>
<dbReference type="EnsemblBacteria" id="AAK87683">
    <property type="protein sequence ID" value="AAK87683"/>
    <property type="gene ID" value="Atu1922"/>
</dbReference>
<dbReference type="GeneID" id="1133960"/>
<dbReference type="KEGG" id="atu:Atu1922"/>
<dbReference type="PATRIC" id="fig|176299.10.peg.1933"/>
<dbReference type="eggNOG" id="COG0203">
    <property type="taxonomic scope" value="Bacteria"/>
</dbReference>
<dbReference type="HOGENOM" id="CLU_074407_2_0_5"/>
<dbReference type="OrthoDB" id="9809073at2"/>
<dbReference type="PhylomeDB" id="Q8UE41"/>
<dbReference type="BioCyc" id="AGRO:ATU1922-MONOMER"/>
<dbReference type="Proteomes" id="UP000000813">
    <property type="component" value="Chromosome circular"/>
</dbReference>
<dbReference type="GO" id="GO:0022625">
    <property type="term" value="C:cytosolic large ribosomal subunit"/>
    <property type="evidence" value="ECO:0007669"/>
    <property type="project" value="TreeGrafter"/>
</dbReference>
<dbReference type="GO" id="GO:0003735">
    <property type="term" value="F:structural constituent of ribosome"/>
    <property type="evidence" value="ECO:0007669"/>
    <property type="project" value="InterPro"/>
</dbReference>
<dbReference type="GO" id="GO:0006412">
    <property type="term" value="P:translation"/>
    <property type="evidence" value="ECO:0007669"/>
    <property type="project" value="UniProtKB-UniRule"/>
</dbReference>
<dbReference type="FunFam" id="3.90.1030.10:FF:000001">
    <property type="entry name" value="50S ribosomal protein L17"/>
    <property type="match status" value="1"/>
</dbReference>
<dbReference type="Gene3D" id="3.90.1030.10">
    <property type="entry name" value="Ribosomal protein L17"/>
    <property type="match status" value="1"/>
</dbReference>
<dbReference type="HAMAP" id="MF_01368">
    <property type="entry name" value="Ribosomal_bL17"/>
    <property type="match status" value="1"/>
</dbReference>
<dbReference type="InterPro" id="IPR000456">
    <property type="entry name" value="Ribosomal_bL17"/>
</dbReference>
<dbReference type="InterPro" id="IPR047859">
    <property type="entry name" value="Ribosomal_bL17_CS"/>
</dbReference>
<dbReference type="InterPro" id="IPR036373">
    <property type="entry name" value="Ribosomal_bL17_sf"/>
</dbReference>
<dbReference type="NCBIfam" id="TIGR00059">
    <property type="entry name" value="L17"/>
    <property type="match status" value="1"/>
</dbReference>
<dbReference type="PANTHER" id="PTHR14413:SF16">
    <property type="entry name" value="LARGE RIBOSOMAL SUBUNIT PROTEIN BL17M"/>
    <property type="match status" value="1"/>
</dbReference>
<dbReference type="PANTHER" id="PTHR14413">
    <property type="entry name" value="RIBOSOMAL PROTEIN L17"/>
    <property type="match status" value="1"/>
</dbReference>
<dbReference type="Pfam" id="PF01196">
    <property type="entry name" value="Ribosomal_L17"/>
    <property type="match status" value="1"/>
</dbReference>
<dbReference type="SUPFAM" id="SSF64263">
    <property type="entry name" value="Prokaryotic ribosomal protein L17"/>
    <property type="match status" value="1"/>
</dbReference>
<dbReference type="PROSITE" id="PS01167">
    <property type="entry name" value="RIBOSOMAL_L17"/>
    <property type="match status" value="1"/>
</dbReference>
<feature type="chain" id="PRO_0000267814" description="Large ribosomal subunit protein bL17">
    <location>
        <begin position="1"/>
        <end position="141"/>
    </location>
</feature>
<proteinExistence type="inferred from homology"/>
<comment type="subunit">
    <text evidence="1">Part of the 50S ribosomal subunit. Contacts protein L32.</text>
</comment>
<comment type="similarity">
    <text evidence="1">Belongs to the bacterial ribosomal protein bL17 family.</text>
</comment>
<gene>
    <name evidence="1" type="primary">rplQ</name>
    <name type="ordered locus">Atu1922</name>
    <name type="ORF">AGR_C_3516</name>
</gene>
<organism>
    <name type="scientific">Agrobacterium fabrum (strain C58 / ATCC 33970)</name>
    <name type="common">Agrobacterium tumefaciens (strain C58)</name>
    <dbReference type="NCBI Taxonomy" id="176299"/>
    <lineage>
        <taxon>Bacteria</taxon>
        <taxon>Pseudomonadati</taxon>
        <taxon>Pseudomonadota</taxon>
        <taxon>Alphaproteobacteria</taxon>
        <taxon>Hyphomicrobiales</taxon>
        <taxon>Rhizobiaceae</taxon>
        <taxon>Rhizobium/Agrobacterium group</taxon>
        <taxon>Agrobacterium</taxon>
        <taxon>Agrobacterium tumefaciens complex</taxon>
    </lineage>
</organism>
<protein>
    <recommendedName>
        <fullName evidence="1">Large ribosomal subunit protein bL17</fullName>
    </recommendedName>
    <alternativeName>
        <fullName evidence="2">50S ribosomal protein L17</fullName>
    </alternativeName>
</protein>
<sequence>MRHGNSGRKLNRTASHRKAMFANMAASLITHEQIVTTLPKAKEIRPIVERLVTLGKRGDLHARRQAISQIKDQDAVRKLFDAIASRYATRNGGYLRIMKAGYRQGDNAALAVVEFVERDVDAKGAADKARVAAEAAAAEAA</sequence>
<name>RL17_AGRFC</name>
<evidence type="ECO:0000255" key="1">
    <source>
        <dbReference type="HAMAP-Rule" id="MF_01368"/>
    </source>
</evidence>
<evidence type="ECO:0000305" key="2"/>
<accession>Q8UE41</accession>
<accession>Q7CY84</accession>
<reference key="1">
    <citation type="journal article" date="2001" name="Science">
        <title>The genome of the natural genetic engineer Agrobacterium tumefaciens C58.</title>
        <authorList>
            <person name="Wood D.W."/>
            <person name="Setubal J.C."/>
            <person name="Kaul R."/>
            <person name="Monks D.E."/>
            <person name="Kitajima J.P."/>
            <person name="Okura V.K."/>
            <person name="Zhou Y."/>
            <person name="Chen L."/>
            <person name="Wood G.E."/>
            <person name="Almeida N.F. Jr."/>
            <person name="Woo L."/>
            <person name="Chen Y."/>
            <person name="Paulsen I.T."/>
            <person name="Eisen J.A."/>
            <person name="Karp P.D."/>
            <person name="Bovee D. Sr."/>
            <person name="Chapman P."/>
            <person name="Clendenning J."/>
            <person name="Deatherage G."/>
            <person name="Gillet W."/>
            <person name="Grant C."/>
            <person name="Kutyavin T."/>
            <person name="Levy R."/>
            <person name="Li M.-J."/>
            <person name="McClelland E."/>
            <person name="Palmieri A."/>
            <person name="Raymond C."/>
            <person name="Rouse G."/>
            <person name="Saenphimmachak C."/>
            <person name="Wu Z."/>
            <person name="Romero P."/>
            <person name="Gordon D."/>
            <person name="Zhang S."/>
            <person name="Yoo H."/>
            <person name="Tao Y."/>
            <person name="Biddle P."/>
            <person name="Jung M."/>
            <person name="Krespan W."/>
            <person name="Perry M."/>
            <person name="Gordon-Kamm B."/>
            <person name="Liao L."/>
            <person name="Kim S."/>
            <person name="Hendrick C."/>
            <person name="Zhao Z.-Y."/>
            <person name="Dolan M."/>
            <person name="Chumley F."/>
            <person name="Tingey S.V."/>
            <person name="Tomb J.-F."/>
            <person name="Gordon M.P."/>
            <person name="Olson M.V."/>
            <person name="Nester E.W."/>
        </authorList>
    </citation>
    <scope>NUCLEOTIDE SEQUENCE [LARGE SCALE GENOMIC DNA]</scope>
    <source>
        <strain>C58 / ATCC 33970</strain>
    </source>
</reference>
<reference key="2">
    <citation type="journal article" date="2001" name="Science">
        <title>Genome sequence of the plant pathogen and biotechnology agent Agrobacterium tumefaciens C58.</title>
        <authorList>
            <person name="Goodner B."/>
            <person name="Hinkle G."/>
            <person name="Gattung S."/>
            <person name="Miller N."/>
            <person name="Blanchard M."/>
            <person name="Qurollo B."/>
            <person name="Goldman B.S."/>
            <person name="Cao Y."/>
            <person name="Askenazi M."/>
            <person name="Halling C."/>
            <person name="Mullin L."/>
            <person name="Houmiel K."/>
            <person name="Gordon J."/>
            <person name="Vaudin M."/>
            <person name="Iartchouk O."/>
            <person name="Epp A."/>
            <person name="Liu F."/>
            <person name="Wollam C."/>
            <person name="Allinger M."/>
            <person name="Doughty D."/>
            <person name="Scott C."/>
            <person name="Lappas C."/>
            <person name="Markelz B."/>
            <person name="Flanagan C."/>
            <person name="Crowell C."/>
            <person name="Gurson J."/>
            <person name="Lomo C."/>
            <person name="Sear C."/>
            <person name="Strub G."/>
            <person name="Cielo C."/>
            <person name="Slater S."/>
        </authorList>
    </citation>
    <scope>NUCLEOTIDE SEQUENCE [LARGE SCALE GENOMIC DNA]</scope>
    <source>
        <strain>C58 / ATCC 33970</strain>
    </source>
</reference>